<dbReference type="EMBL" id="AJ697694">
    <property type="protein sequence ID" value="CAG26895.1"/>
    <property type="molecule type" value="mRNA"/>
</dbReference>
<dbReference type="PDB" id="2X45">
    <property type="method" value="X-ray"/>
    <property type="resolution" value="1.40 A"/>
    <property type="chains" value="A/B/C=17-159"/>
</dbReference>
<dbReference type="PDB" id="2X46">
    <property type="method" value="X-ray"/>
    <property type="resolution" value="1.00 A"/>
    <property type="chains" value="A=17-159"/>
</dbReference>
<dbReference type="PDBsum" id="2X45"/>
<dbReference type="PDBsum" id="2X46"/>
<dbReference type="SMR" id="Q5GQ85"/>
<dbReference type="Allergome" id="1150">
    <property type="allergen name" value="Arg r 1"/>
</dbReference>
<dbReference type="Allergome" id="3101">
    <property type="allergen name" value="Arg r 1.0101"/>
</dbReference>
<dbReference type="EvolutionaryTrace" id="Q5GQ85"/>
<dbReference type="GO" id="GO:0005576">
    <property type="term" value="C:extracellular region"/>
    <property type="evidence" value="ECO:0007669"/>
    <property type="project" value="UniProtKB-SubCell"/>
</dbReference>
<dbReference type="GO" id="GO:0043176">
    <property type="term" value="F:amine binding"/>
    <property type="evidence" value="ECO:0007669"/>
    <property type="project" value="InterPro"/>
</dbReference>
<dbReference type="GO" id="GO:0030682">
    <property type="term" value="P:symbiont-mediated perturbation of host defenses"/>
    <property type="evidence" value="ECO:0007669"/>
    <property type="project" value="InterPro"/>
</dbReference>
<dbReference type="Gene3D" id="2.40.128.20">
    <property type="match status" value="1"/>
</dbReference>
<dbReference type="InterPro" id="IPR012674">
    <property type="entry name" value="Calycin"/>
</dbReference>
<dbReference type="InterPro" id="IPR002970">
    <property type="entry name" value="Tick_his-bd"/>
</dbReference>
<dbReference type="Pfam" id="PF02098">
    <property type="entry name" value="His_binding"/>
    <property type="match status" value="1"/>
</dbReference>
<dbReference type="SUPFAM" id="SSF50814">
    <property type="entry name" value="Lipocalins"/>
    <property type="match status" value="1"/>
</dbReference>
<comment type="subcellular location">
    <subcellularLocation>
        <location>Secreted</location>
    </subcellularLocation>
</comment>
<comment type="PTM">
    <text>Not glycosylated.</text>
</comment>
<comment type="allergen">
    <text evidence="2">Causes an allergic reaction in human. Binds to IgE. Major allergen responsible for anaphylactic reactions.</text>
</comment>
<comment type="similarity">
    <text evidence="4">Belongs to the calycin superfamily. Histamine-binding salivary protein family.</text>
</comment>
<name>ARGR1_ARGRF</name>
<evidence type="ECO:0000250" key="1"/>
<evidence type="ECO:0000269" key="2">
    <source>
    </source>
</evidence>
<evidence type="ECO:0000269" key="3">
    <source ref="2"/>
</evidence>
<evidence type="ECO:0000305" key="4"/>
<evidence type="ECO:0007829" key="5">
    <source>
        <dbReference type="PDB" id="2X45"/>
    </source>
</evidence>
<evidence type="ECO:0007829" key="6">
    <source>
        <dbReference type="PDB" id="2X46"/>
    </source>
</evidence>
<organism>
    <name type="scientific">Argas reflexus</name>
    <name type="common">European pigeon tick</name>
    <dbReference type="NCBI Taxonomy" id="34604"/>
    <lineage>
        <taxon>Eukaryota</taxon>
        <taxon>Metazoa</taxon>
        <taxon>Ecdysozoa</taxon>
        <taxon>Arthropoda</taxon>
        <taxon>Chelicerata</taxon>
        <taxon>Arachnida</taxon>
        <taxon>Acari</taxon>
        <taxon>Parasitiformes</taxon>
        <taxon>Ixodida</taxon>
        <taxon>Ixodoidea</taxon>
        <taxon>Argasidae</taxon>
        <taxon>Argasinae</taxon>
        <taxon>Argas</taxon>
    </lineage>
</organism>
<protein>
    <recommendedName>
        <fullName>Allergen Arg r 1</fullName>
    </recommendedName>
    <allergenName>Arg r 1</allergenName>
</protein>
<proteinExistence type="evidence at protein level"/>
<reference key="1">
    <citation type="journal article" date="2005" name="J. Allergy Clin. Immunol.">
        <title>IgE-mediated anaphylaxis caused by bites of the pigeon tick Argas reflexus: cloning and expression of the major allergen Arg r 1.</title>
        <authorList>
            <person name="Hilger C."/>
            <person name="Bessot J.-C."/>
            <person name="Hutt N."/>
            <person name="Grigioni F."/>
            <person name="de Blay F."/>
            <person name="Pauli G."/>
            <person name="Hentges F."/>
        </authorList>
    </citation>
    <scope>NUCLEOTIDE SEQUENCE [MRNA]</scope>
    <scope>PROTEIN SEQUENCE OF 17-30</scope>
    <scope>LACK OF GLYCOSYLATION</scope>
    <scope>ALLERGEN</scope>
</reference>
<reference key="2">
    <citation type="submission" date="2008-09" db="UniProtKB">
        <authorList>
            <person name="Hilger C."/>
        </authorList>
    </citation>
    <scope>PROTEIN SEQUENCE OF 17-31</scope>
    <scope>SEQUENCE REVISION TO 18 AND 26</scope>
</reference>
<accession>Q5GQ85</accession>
<feature type="signal peptide" evidence="2 3">
    <location>
        <begin position="1"/>
        <end position="16"/>
    </location>
</feature>
<feature type="chain" id="PRO_5000072608" description="Allergen Arg r 1">
    <location>
        <begin position="17"/>
        <end position="159"/>
    </location>
</feature>
<feature type="disulfide bond" evidence="1">
    <location>
        <begin position="50"/>
        <end position="155"/>
    </location>
</feature>
<feature type="disulfide bond" evidence="1">
    <location>
        <begin position="109"/>
        <end position="134"/>
    </location>
</feature>
<feature type="sequence conflict" description="In Ref. 1; AA sequence." evidence="4" ref="1">
    <original>C</original>
    <variation>E</variation>
    <location>
        <position position="19"/>
    </location>
</feature>
<feature type="helix" evidence="5">
    <location>
        <begin position="17"/>
        <end position="19"/>
    </location>
</feature>
<feature type="helix" evidence="6">
    <location>
        <begin position="25"/>
        <end position="30"/>
    </location>
</feature>
<feature type="strand" evidence="6">
    <location>
        <begin position="33"/>
        <end position="35"/>
    </location>
</feature>
<feature type="strand" evidence="6">
    <location>
        <begin position="37"/>
        <end position="43"/>
    </location>
</feature>
<feature type="strand" evidence="6">
    <location>
        <begin position="52"/>
        <end position="59"/>
    </location>
</feature>
<feature type="turn" evidence="6">
    <location>
        <begin position="60"/>
        <end position="63"/>
    </location>
</feature>
<feature type="strand" evidence="6">
    <location>
        <begin position="64"/>
        <end position="70"/>
    </location>
</feature>
<feature type="strand" evidence="6">
    <location>
        <begin position="81"/>
        <end position="88"/>
    </location>
</feature>
<feature type="strand" evidence="6">
    <location>
        <begin position="91"/>
        <end position="94"/>
    </location>
</feature>
<feature type="strand" evidence="6">
    <location>
        <begin position="97"/>
        <end position="104"/>
    </location>
</feature>
<feature type="strand" evidence="6">
    <location>
        <begin position="106"/>
        <end position="114"/>
    </location>
</feature>
<feature type="strand" evidence="6">
    <location>
        <begin position="117"/>
        <end position="123"/>
    </location>
</feature>
<feature type="helix" evidence="6">
    <location>
        <begin position="124"/>
        <end position="126"/>
    </location>
</feature>
<feature type="helix" evidence="6">
    <location>
        <begin position="134"/>
        <end position="143"/>
    </location>
</feature>
<keyword id="KW-0002">3D-structure</keyword>
<keyword id="KW-0020">Allergen</keyword>
<keyword id="KW-0903">Direct protein sequencing</keyword>
<keyword id="KW-1015">Disulfide bond</keyword>
<keyword id="KW-0964">Secreted</keyword>
<keyword id="KW-0732">Signal</keyword>
<sequence>MALIILLVACLSVVSADDCSGKTDAWTSIKGPKTGGYWLKQTTKTGENECTYVKGTDFKENTKTATYTYGYKDASGKLTKTTGTATAKGSDIVVGSDTSTVIYTDGKTCDVVKHGGHTELWVHSSKTSGGYNNCCDKKFTETRGSTPANEVYKKCPGMP</sequence>